<gene>
    <name type="ordered locus">PCC8801_1959</name>
</gene>
<keyword id="KW-1185">Reference proteome</keyword>
<feature type="chain" id="PRO_1000143693" description="UPF0367 protein PCC8801_1959">
    <location>
        <begin position="1"/>
        <end position="89"/>
    </location>
</feature>
<dbReference type="EMBL" id="CP001287">
    <property type="protein sequence ID" value="ACK65997.1"/>
    <property type="molecule type" value="Genomic_DNA"/>
</dbReference>
<dbReference type="RefSeq" id="WP_012595269.1">
    <property type="nucleotide sequence ID" value="NC_011726.1"/>
</dbReference>
<dbReference type="STRING" id="41431.PCC8801_1959"/>
<dbReference type="KEGG" id="cyp:PCC8801_1959"/>
<dbReference type="eggNOG" id="ENOG5032YB3">
    <property type="taxonomic scope" value="Bacteria"/>
</dbReference>
<dbReference type="HOGENOM" id="CLU_180777_0_0_3"/>
<dbReference type="OrthoDB" id="516864at2"/>
<dbReference type="Proteomes" id="UP000008204">
    <property type="component" value="Chromosome"/>
</dbReference>
<dbReference type="HAMAP" id="MF_01360">
    <property type="entry name" value="UPF0367"/>
    <property type="match status" value="1"/>
</dbReference>
<dbReference type="InterPro" id="IPR020885">
    <property type="entry name" value="UPF0367"/>
</dbReference>
<dbReference type="NCBIfam" id="NF010236">
    <property type="entry name" value="PRK13683.1"/>
    <property type="match status" value="1"/>
</dbReference>
<organism>
    <name type="scientific">Rippkaea orientalis (strain PCC 8801 / RF-1)</name>
    <name type="common">Cyanothece sp. (strain PCC 8801)</name>
    <dbReference type="NCBI Taxonomy" id="41431"/>
    <lineage>
        <taxon>Bacteria</taxon>
        <taxon>Bacillati</taxon>
        <taxon>Cyanobacteriota</taxon>
        <taxon>Cyanophyceae</taxon>
        <taxon>Oscillatoriophycideae</taxon>
        <taxon>Chroococcales</taxon>
        <taxon>Aphanothecaceae</taxon>
        <taxon>Rippkaea</taxon>
        <taxon>Rippkaea orientalis</taxon>
    </lineage>
</organism>
<protein>
    <recommendedName>
        <fullName evidence="1">UPF0367 protein PCC8801_1959</fullName>
    </recommendedName>
</protein>
<name>Y1959_RIPO1</name>
<accession>B7JY33</accession>
<evidence type="ECO:0000255" key="1">
    <source>
        <dbReference type="HAMAP-Rule" id="MF_01360"/>
    </source>
</evidence>
<reference key="1">
    <citation type="journal article" date="2011" name="MBio">
        <title>Novel metabolic attributes of the genus Cyanothece, comprising a group of unicellular nitrogen-fixing Cyanobacteria.</title>
        <authorList>
            <person name="Bandyopadhyay A."/>
            <person name="Elvitigala T."/>
            <person name="Welsh E."/>
            <person name="Stockel J."/>
            <person name="Liberton M."/>
            <person name="Min H."/>
            <person name="Sherman L.A."/>
            <person name="Pakrasi H.B."/>
        </authorList>
    </citation>
    <scope>NUCLEOTIDE SEQUENCE [LARGE SCALE GENOMIC DNA]</scope>
    <source>
        <strain>PCC 8801 / RF-1</strain>
    </source>
</reference>
<proteinExistence type="inferred from homology"/>
<comment type="similarity">
    <text evidence="1">Belongs to the UPF0367 family.</text>
</comment>
<sequence length="89" mass="9544">MISIDLTLKYTPIPISVQRKESEAAEALYQEIITAMRSPSPIVLELTCEKQTEKKVAVMSDQISGVIVSQKDGAAATGRAPGFFSAAES</sequence>